<feature type="chain" id="PRO_0000324092" description="RNA polymerase I subunit H">
    <location>
        <begin position="1"/>
        <end position="213"/>
    </location>
</feature>
<feature type="region of interest" description="Disordered" evidence="1">
    <location>
        <begin position="1"/>
        <end position="70"/>
    </location>
</feature>
<feature type="compositionally biased region" description="Basic and acidic residues" evidence="1">
    <location>
        <begin position="1"/>
        <end position="19"/>
    </location>
</feature>
<feature type="compositionally biased region" description="Pro residues" evidence="1">
    <location>
        <begin position="21"/>
        <end position="31"/>
    </location>
</feature>
<feature type="compositionally biased region" description="Basic and acidic residues" evidence="1">
    <location>
        <begin position="43"/>
        <end position="53"/>
    </location>
</feature>
<feature type="compositionally biased region" description="Basic and acidic residues" evidence="1">
    <location>
        <begin position="60"/>
        <end position="69"/>
    </location>
</feature>
<feature type="sequence conflict" description="In Ref. 1; BAB24473." evidence="3" ref="1">
    <original>P</original>
    <variation>Q</variation>
    <location>
        <position position="21"/>
    </location>
</feature>
<gene>
    <name evidence="4" type="primary">Polr1has</name>
    <name type="synonym">Tctex4</name>
    <name type="synonym">Znrd1-as</name>
    <name evidence="4" type="synonym">Znrd1as</name>
</gene>
<name>ZRAS1_MOUSE</name>
<sequence>MVERMKKDTGDETKTKVQEEPPSPSPPPPPPPRRERQKQHYWVPEREKKQIERHIHRTSHAREFTDKPWRQPRLFSETTLPKIVLEEESIPQAQKRRQAHERELLQIKDHRERMIRGRELLQQRLKDRILRKSPSQIPLPEKRDQVKKQKKEFEKVVAYPLVQPSCTSRIKVDVLMEKSQDEEDLSTIIKPFGRRFLAVPPFLRTQIGKIKDL</sequence>
<comment type="function">
    <text evidence="2">May be involved in male sterility.</text>
</comment>
<comment type="tissue specificity">
    <text evidence="2">Expressed during spermatogenesis, initially at pachytene stage with abundance increasing in round spermatids and decreasing again during spermatid elongation.</text>
</comment>
<comment type="sequence caution" evidence="3">
    <conflict type="erroneous initiation">
        <sequence resource="EMBL-CDS" id="AAH27007"/>
    </conflict>
    <text>Extended N-terminus.</text>
</comment>
<comment type="sequence caution" evidence="3">
    <conflict type="erroneous initiation">
        <sequence resource="EMBL-CDS" id="BAB24473"/>
    </conflict>
    <text>Extended N-terminus.</text>
</comment>
<comment type="sequence caution" evidence="3">
    <conflict type="frameshift">
        <sequence resource="EMBL-CDS" id="BAB24473"/>
    </conflict>
</comment>
<accession>Q8R0E5</accession>
<accession>Q9DA28</accession>
<proteinExistence type="evidence at transcript level"/>
<keyword id="KW-1185">Reference proteome</keyword>
<organism>
    <name type="scientific">Mus musculus</name>
    <name type="common">Mouse</name>
    <dbReference type="NCBI Taxonomy" id="10090"/>
    <lineage>
        <taxon>Eukaryota</taxon>
        <taxon>Metazoa</taxon>
        <taxon>Chordata</taxon>
        <taxon>Craniata</taxon>
        <taxon>Vertebrata</taxon>
        <taxon>Euteleostomi</taxon>
        <taxon>Mammalia</taxon>
        <taxon>Eutheria</taxon>
        <taxon>Euarchontoglires</taxon>
        <taxon>Glires</taxon>
        <taxon>Rodentia</taxon>
        <taxon>Myomorpha</taxon>
        <taxon>Muroidea</taxon>
        <taxon>Muridae</taxon>
        <taxon>Murinae</taxon>
        <taxon>Mus</taxon>
        <taxon>Mus</taxon>
    </lineage>
</organism>
<evidence type="ECO:0000256" key="1">
    <source>
        <dbReference type="SAM" id="MobiDB-lite"/>
    </source>
</evidence>
<evidence type="ECO:0000269" key="2">
    <source>
    </source>
</evidence>
<evidence type="ECO:0000305" key="3"/>
<evidence type="ECO:0000312" key="4">
    <source>
        <dbReference type="MGI" id="MGI:1923666"/>
    </source>
</evidence>
<dbReference type="EMBL" id="AK006236">
    <property type="protein sequence ID" value="BAB24473.1"/>
    <property type="status" value="ALT_SEQ"/>
    <property type="molecule type" value="mRNA"/>
</dbReference>
<dbReference type="EMBL" id="BC027007">
    <property type="protein sequence ID" value="AAH27007.1"/>
    <property type="status" value="ALT_INIT"/>
    <property type="molecule type" value="mRNA"/>
</dbReference>
<dbReference type="CCDS" id="CCDS89093.1"/>
<dbReference type="RefSeq" id="NP_001355353.1">
    <property type="nucleotide sequence ID" value="NM_001368424.1"/>
</dbReference>
<dbReference type="RefSeq" id="NP_001355354.1">
    <property type="nucleotide sequence ID" value="NM_001368425.1"/>
</dbReference>
<dbReference type="RefSeq" id="NP_083878.1">
    <property type="nucleotide sequence ID" value="NM_029602.1"/>
</dbReference>
<dbReference type="RefSeq" id="XP_030105994.1">
    <property type="nucleotide sequence ID" value="XM_030250134.2"/>
</dbReference>
<dbReference type="STRING" id="10090.ENSMUSP00000048695"/>
<dbReference type="PaxDb" id="10090-ENSMUSP00000048695"/>
<dbReference type="Ensembl" id="ENSMUST00000040177.8">
    <property type="protein sequence ID" value="ENSMUSP00000048695.8"/>
    <property type="gene ID" value="ENSMUSG00000036214.15"/>
</dbReference>
<dbReference type="Ensembl" id="ENSMUST00000173814.2">
    <property type="protein sequence ID" value="ENSMUSP00000134016.2"/>
    <property type="gene ID" value="ENSMUSG00000036214.15"/>
</dbReference>
<dbReference type="GeneID" id="76416"/>
<dbReference type="KEGG" id="mmu:76416"/>
<dbReference type="UCSC" id="uc008clq.1">
    <property type="organism name" value="mouse"/>
</dbReference>
<dbReference type="AGR" id="MGI:1923666"/>
<dbReference type="CTD" id="76416"/>
<dbReference type="MGI" id="MGI:1923666">
    <property type="gene designation" value="Polr1has"/>
</dbReference>
<dbReference type="VEuPathDB" id="HostDB:ENSMUSG00000036214"/>
<dbReference type="eggNOG" id="ENOG502TFIF">
    <property type="taxonomic scope" value="Eukaryota"/>
</dbReference>
<dbReference type="GeneTree" id="ENSGT00390000016534"/>
<dbReference type="HOGENOM" id="CLU_1437546_0_0_1"/>
<dbReference type="InParanoid" id="Q8R0E5"/>
<dbReference type="OMA" id="GIQNAQR"/>
<dbReference type="PhylomeDB" id="Q8R0E5"/>
<dbReference type="TreeFam" id="TF337245"/>
<dbReference type="BioGRID-ORCS" id="76416">
    <property type="hits" value="0 hits in 74 CRISPR screens"/>
</dbReference>
<dbReference type="PRO" id="PR:Q8R0E5"/>
<dbReference type="Proteomes" id="UP000000589">
    <property type="component" value="Chromosome 17"/>
</dbReference>
<dbReference type="RNAct" id="Q8R0E5">
    <property type="molecule type" value="protein"/>
</dbReference>
<dbReference type="Bgee" id="ENSMUSG00000036214">
    <property type="expression patterns" value="Expressed in seminiferous tubule of testis and 228 other cell types or tissues"/>
</dbReference>
<dbReference type="ExpressionAtlas" id="Q8R0E5">
    <property type="expression patterns" value="baseline and differential"/>
</dbReference>
<dbReference type="InterPro" id="IPR040005">
    <property type="entry name" value="ZNRD1-AS1"/>
</dbReference>
<dbReference type="PANTHER" id="PTHR41403">
    <property type="entry name" value="RCG43477-RELATED"/>
    <property type="match status" value="1"/>
</dbReference>
<dbReference type="PANTHER" id="PTHR41403:SF3">
    <property type="entry name" value="ZNRD1 ANTISENSE RNA 1-RELATED"/>
    <property type="match status" value="1"/>
</dbReference>
<reference key="1">
    <citation type="journal article" date="2005" name="Science">
        <title>The transcriptional landscape of the mammalian genome.</title>
        <authorList>
            <person name="Carninci P."/>
            <person name="Kasukawa T."/>
            <person name="Katayama S."/>
            <person name="Gough J."/>
            <person name="Frith M.C."/>
            <person name="Maeda N."/>
            <person name="Oyama R."/>
            <person name="Ravasi T."/>
            <person name="Lenhard B."/>
            <person name="Wells C."/>
            <person name="Kodzius R."/>
            <person name="Shimokawa K."/>
            <person name="Bajic V.B."/>
            <person name="Brenner S.E."/>
            <person name="Batalov S."/>
            <person name="Forrest A.R."/>
            <person name="Zavolan M."/>
            <person name="Davis M.J."/>
            <person name="Wilming L.G."/>
            <person name="Aidinis V."/>
            <person name="Allen J.E."/>
            <person name="Ambesi-Impiombato A."/>
            <person name="Apweiler R."/>
            <person name="Aturaliya R.N."/>
            <person name="Bailey T.L."/>
            <person name="Bansal M."/>
            <person name="Baxter L."/>
            <person name="Beisel K.W."/>
            <person name="Bersano T."/>
            <person name="Bono H."/>
            <person name="Chalk A.M."/>
            <person name="Chiu K.P."/>
            <person name="Choudhary V."/>
            <person name="Christoffels A."/>
            <person name="Clutterbuck D.R."/>
            <person name="Crowe M.L."/>
            <person name="Dalla E."/>
            <person name="Dalrymple B.P."/>
            <person name="de Bono B."/>
            <person name="Della Gatta G."/>
            <person name="di Bernardo D."/>
            <person name="Down T."/>
            <person name="Engstrom P."/>
            <person name="Fagiolini M."/>
            <person name="Faulkner G."/>
            <person name="Fletcher C.F."/>
            <person name="Fukushima T."/>
            <person name="Furuno M."/>
            <person name="Futaki S."/>
            <person name="Gariboldi M."/>
            <person name="Georgii-Hemming P."/>
            <person name="Gingeras T.R."/>
            <person name="Gojobori T."/>
            <person name="Green R.E."/>
            <person name="Gustincich S."/>
            <person name="Harbers M."/>
            <person name="Hayashi Y."/>
            <person name="Hensch T.K."/>
            <person name="Hirokawa N."/>
            <person name="Hill D."/>
            <person name="Huminiecki L."/>
            <person name="Iacono M."/>
            <person name="Ikeo K."/>
            <person name="Iwama A."/>
            <person name="Ishikawa T."/>
            <person name="Jakt M."/>
            <person name="Kanapin A."/>
            <person name="Katoh M."/>
            <person name="Kawasawa Y."/>
            <person name="Kelso J."/>
            <person name="Kitamura H."/>
            <person name="Kitano H."/>
            <person name="Kollias G."/>
            <person name="Krishnan S.P."/>
            <person name="Kruger A."/>
            <person name="Kummerfeld S.K."/>
            <person name="Kurochkin I.V."/>
            <person name="Lareau L.F."/>
            <person name="Lazarevic D."/>
            <person name="Lipovich L."/>
            <person name="Liu J."/>
            <person name="Liuni S."/>
            <person name="McWilliam S."/>
            <person name="Madan Babu M."/>
            <person name="Madera M."/>
            <person name="Marchionni L."/>
            <person name="Matsuda H."/>
            <person name="Matsuzawa S."/>
            <person name="Miki H."/>
            <person name="Mignone F."/>
            <person name="Miyake S."/>
            <person name="Morris K."/>
            <person name="Mottagui-Tabar S."/>
            <person name="Mulder N."/>
            <person name="Nakano N."/>
            <person name="Nakauchi H."/>
            <person name="Ng P."/>
            <person name="Nilsson R."/>
            <person name="Nishiguchi S."/>
            <person name="Nishikawa S."/>
            <person name="Nori F."/>
            <person name="Ohara O."/>
            <person name="Okazaki Y."/>
            <person name="Orlando V."/>
            <person name="Pang K.C."/>
            <person name="Pavan W.J."/>
            <person name="Pavesi G."/>
            <person name="Pesole G."/>
            <person name="Petrovsky N."/>
            <person name="Piazza S."/>
            <person name="Reed J."/>
            <person name="Reid J.F."/>
            <person name="Ring B.Z."/>
            <person name="Ringwald M."/>
            <person name="Rost B."/>
            <person name="Ruan Y."/>
            <person name="Salzberg S.L."/>
            <person name="Sandelin A."/>
            <person name="Schneider C."/>
            <person name="Schoenbach C."/>
            <person name="Sekiguchi K."/>
            <person name="Semple C.A."/>
            <person name="Seno S."/>
            <person name="Sessa L."/>
            <person name="Sheng Y."/>
            <person name="Shibata Y."/>
            <person name="Shimada H."/>
            <person name="Shimada K."/>
            <person name="Silva D."/>
            <person name="Sinclair B."/>
            <person name="Sperling S."/>
            <person name="Stupka E."/>
            <person name="Sugiura K."/>
            <person name="Sultana R."/>
            <person name="Takenaka Y."/>
            <person name="Taki K."/>
            <person name="Tammoja K."/>
            <person name="Tan S.L."/>
            <person name="Tang S."/>
            <person name="Taylor M.S."/>
            <person name="Tegner J."/>
            <person name="Teichmann S.A."/>
            <person name="Ueda H.R."/>
            <person name="van Nimwegen E."/>
            <person name="Verardo R."/>
            <person name="Wei C.L."/>
            <person name="Yagi K."/>
            <person name="Yamanishi H."/>
            <person name="Zabarovsky E."/>
            <person name="Zhu S."/>
            <person name="Zimmer A."/>
            <person name="Hide W."/>
            <person name="Bult C."/>
            <person name="Grimmond S.M."/>
            <person name="Teasdale R.D."/>
            <person name="Liu E.T."/>
            <person name="Brusic V."/>
            <person name="Quackenbush J."/>
            <person name="Wahlestedt C."/>
            <person name="Mattick J.S."/>
            <person name="Hume D.A."/>
            <person name="Kai C."/>
            <person name="Sasaki D."/>
            <person name="Tomaru Y."/>
            <person name="Fukuda S."/>
            <person name="Kanamori-Katayama M."/>
            <person name="Suzuki M."/>
            <person name="Aoki J."/>
            <person name="Arakawa T."/>
            <person name="Iida J."/>
            <person name="Imamura K."/>
            <person name="Itoh M."/>
            <person name="Kato T."/>
            <person name="Kawaji H."/>
            <person name="Kawagashira N."/>
            <person name="Kawashima T."/>
            <person name="Kojima M."/>
            <person name="Kondo S."/>
            <person name="Konno H."/>
            <person name="Nakano K."/>
            <person name="Ninomiya N."/>
            <person name="Nishio T."/>
            <person name="Okada M."/>
            <person name="Plessy C."/>
            <person name="Shibata K."/>
            <person name="Shiraki T."/>
            <person name="Suzuki S."/>
            <person name="Tagami M."/>
            <person name="Waki K."/>
            <person name="Watahiki A."/>
            <person name="Okamura-Oho Y."/>
            <person name="Suzuki H."/>
            <person name="Kawai J."/>
            <person name="Hayashizaki Y."/>
        </authorList>
    </citation>
    <scope>NUCLEOTIDE SEQUENCE [LARGE SCALE MRNA]</scope>
    <source>
        <strain>C57BL/6J</strain>
        <tissue>Testis</tissue>
    </source>
</reference>
<reference key="2">
    <citation type="journal article" date="2004" name="Genome Res.">
        <title>The status, quality, and expansion of the NIH full-length cDNA project: the Mammalian Gene Collection (MGC).</title>
        <authorList>
            <consortium name="The MGC Project Team"/>
        </authorList>
    </citation>
    <scope>NUCLEOTIDE SEQUENCE [LARGE SCALE MRNA]</scope>
    <source>
        <tissue>Eye</tissue>
    </source>
</reference>
<reference key="3">
    <citation type="journal article" date="1991" name="Dev. Genet.">
        <title>Several testis-expressed genes in the mouse T-complex have expression differences between wild-type and t-mutant mice.</title>
        <authorList>
            <person name="Ha H."/>
            <person name="Howard C.A."/>
            <person name="Yeom Y.I."/>
            <person name="Abe K."/>
            <person name="Uehara H."/>
            <person name="Artzt K."/>
            <person name="Bennett D."/>
        </authorList>
    </citation>
    <scope>FUNCTION</scope>
    <scope>TISSUE SPECIFICITY</scope>
</reference>
<protein>
    <recommendedName>
        <fullName evidence="3">RNA polymerase I subunit H</fullName>
    </recommendedName>
    <alternativeName>
        <fullName>Putative uncharacterized protein ZNRD1-AS1</fullName>
    </alternativeName>
    <alternativeName>
        <fullName>T-complex testis-expressed protein 4</fullName>
    </alternativeName>
    <alternativeName>
        <fullName>ZNRD1 antisense RNA 1</fullName>
    </alternativeName>
    <alternativeName>
        <fullName>ZNRD1 antisense gene protein 1</fullName>
    </alternativeName>
</protein>